<name>SRK1_SPOLA</name>
<evidence type="ECO:0000255" key="1">
    <source>
        <dbReference type="PROSITE-ProRule" id="PRU00159"/>
    </source>
</evidence>
<evidence type="ECO:0000255" key="2">
    <source>
        <dbReference type="PROSITE-ProRule" id="PRU00191"/>
    </source>
</evidence>
<evidence type="ECO:0000255" key="3">
    <source>
        <dbReference type="PROSITE-ProRule" id="PRU00192"/>
    </source>
</evidence>
<evidence type="ECO:0000255" key="4">
    <source>
        <dbReference type="PROSITE-ProRule" id="PRU10028"/>
    </source>
</evidence>
<evidence type="ECO:0000256" key="5">
    <source>
        <dbReference type="SAM" id="MobiDB-lite"/>
    </source>
</evidence>
<evidence type="ECO:0000305" key="6"/>
<gene>
    <name type="primary">SRK1</name>
</gene>
<organism>
    <name type="scientific">Spongilla lacustris</name>
    <name type="common">Freshwater sponge</name>
    <dbReference type="NCBI Taxonomy" id="6055"/>
    <lineage>
        <taxon>Eukaryota</taxon>
        <taxon>Metazoa</taxon>
        <taxon>Porifera</taxon>
        <taxon>Demospongiae</taxon>
        <taxon>Heteroscleromorpha</taxon>
        <taxon>Spongillida</taxon>
        <taxon>Spongillidae</taxon>
        <taxon>Spongilla</taxon>
    </lineage>
</organism>
<proteinExistence type="evidence at transcript level"/>
<dbReference type="EC" id="2.7.10.2"/>
<dbReference type="EMBL" id="X61601">
    <property type="protein sequence ID" value="CAA43798.1"/>
    <property type="molecule type" value="mRNA"/>
</dbReference>
<dbReference type="PIR" id="S24550">
    <property type="entry name" value="S24550"/>
</dbReference>
<dbReference type="SMR" id="P42686"/>
<dbReference type="BRENDA" id="2.7.10.2">
    <property type="organism ID" value="5838"/>
</dbReference>
<dbReference type="GO" id="GO:0005737">
    <property type="term" value="C:cytoplasm"/>
    <property type="evidence" value="ECO:0007669"/>
    <property type="project" value="UniProtKB-SubCell"/>
</dbReference>
<dbReference type="GO" id="GO:0005524">
    <property type="term" value="F:ATP binding"/>
    <property type="evidence" value="ECO:0007669"/>
    <property type="project" value="UniProtKB-KW"/>
</dbReference>
<dbReference type="GO" id="GO:0004715">
    <property type="term" value="F:non-membrane spanning protein tyrosine kinase activity"/>
    <property type="evidence" value="ECO:0007669"/>
    <property type="project" value="UniProtKB-EC"/>
</dbReference>
<dbReference type="CDD" id="cd05068">
    <property type="entry name" value="PTKc_Frk_like"/>
    <property type="match status" value="1"/>
</dbReference>
<dbReference type="CDD" id="cd09933">
    <property type="entry name" value="SH2_Src_family"/>
    <property type="match status" value="1"/>
</dbReference>
<dbReference type="CDD" id="cd11845">
    <property type="entry name" value="SH3_Src_like"/>
    <property type="match status" value="1"/>
</dbReference>
<dbReference type="FunFam" id="1.10.510.10:FF:000318">
    <property type="entry name" value="Tyrosine-protein kinase"/>
    <property type="match status" value="1"/>
</dbReference>
<dbReference type="FunFam" id="2.30.30.40:FF:000229">
    <property type="entry name" value="Tyrosine-protein kinase"/>
    <property type="match status" value="1"/>
</dbReference>
<dbReference type="FunFam" id="3.30.200.20:FF:000037">
    <property type="entry name" value="Tyrosine-protein kinase"/>
    <property type="match status" value="1"/>
</dbReference>
<dbReference type="FunFam" id="3.30.505.10:FF:000044">
    <property type="entry name" value="Tyrosine-protein kinase"/>
    <property type="match status" value="1"/>
</dbReference>
<dbReference type="Gene3D" id="3.30.200.20">
    <property type="entry name" value="Phosphorylase Kinase, domain 1"/>
    <property type="match status" value="1"/>
</dbReference>
<dbReference type="Gene3D" id="3.30.505.10">
    <property type="entry name" value="SH2 domain"/>
    <property type="match status" value="1"/>
</dbReference>
<dbReference type="Gene3D" id="2.30.30.40">
    <property type="entry name" value="SH3 Domains"/>
    <property type="match status" value="1"/>
</dbReference>
<dbReference type="Gene3D" id="1.10.510.10">
    <property type="entry name" value="Transferase(Phosphotransferase) domain 1"/>
    <property type="match status" value="1"/>
</dbReference>
<dbReference type="InterPro" id="IPR011009">
    <property type="entry name" value="Kinase-like_dom_sf"/>
</dbReference>
<dbReference type="InterPro" id="IPR050198">
    <property type="entry name" value="Non-receptor_tyrosine_kinases"/>
</dbReference>
<dbReference type="InterPro" id="IPR000719">
    <property type="entry name" value="Prot_kinase_dom"/>
</dbReference>
<dbReference type="InterPro" id="IPR017441">
    <property type="entry name" value="Protein_kinase_ATP_BS"/>
</dbReference>
<dbReference type="InterPro" id="IPR001245">
    <property type="entry name" value="Ser-Thr/Tyr_kinase_cat_dom"/>
</dbReference>
<dbReference type="InterPro" id="IPR000980">
    <property type="entry name" value="SH2"/>
</dbReference>
<dbReference type="InterPro" id="IPR036860">
    <property type="entry name" value="SH2_dom_sf"/>
</dbReference>
<dbReference type="InterPro" id="IPR036028">
    <property type="entry name" value="SH3-like_dom_sf"/>
</dbReference>
<dbReference type="InterPro" id="IPR001452">
    <property type="entry name" value="SH3_domain"/>
</dbReference>
<dbReference type="InterPro" id="IPR008266">
    <property type="entry name" value="Tyr_kinase_AS"/>
</dbReference>
<dbReference type="InterPro" id="IPR020635">
    <property type="entry name" value="Tyr_kinase_cat_dom"/>
</dbReference>
<dbReference type="PANTHER" id="PTHR24418">
    <property type="entry name" value="TYROSINE-PROTEIN KINASE"/>
    <property type="match status" value="1"/>
</dbReference>
<dbReference type="Pfam" id="PF07714">
    <property type="entry name" value="PK_Tyr_Ser-Thr"/>
    <property type="match status" value="1"/>
</dbReference>
<dbReference type="Pfam" id="PF00017">
    <property type="entry name" value="SH2"/>
    <property type="match status" value="1"/>
</dbReference>
<dbReference type="Pfam" id="PF00018">
    <property type="entry name" value="SH3_1"/>
    <property type="match status" value="1"/>
</dbReference>
<dbReference type="PRINTS" id="PR00401">
    <property type="entry name" value="SH2DOMAIN"/>
</dbReference>
<dbReference type="PRINTS" id="PR00452">
    <property type="entry name" value="SH3DOMAIN"/>
</dbReference>
<dbReference type="PRINTS" id="PR00109">
    <property type="entry name" value="TYRKINASE"/>
</dbReference>
<dbReference type="SMART" id="SM00252">
    <property type="entry name" value="SH2"/>
    <property type="match status" value="1"/>
</dbReference>
<dbReference type="SMART" id="SM00326">
    <property type="entry name" value="SH3"/>
    <property type="match status" value="1"/>
</dbReference>
<dbReference type="SMART" id="SM00219">
    <property type="entry name" value="TyrKc"/>
    <property type="match status" value="1"/>
</dbReference>
<dbReference type="SUPFAM" id="SSF56112">
    <property type="entry name" value="Protein kinase-like (PK-like)"/>
    <property type="match status" value="1"/>
</dbReference>
<dbReference type="SUPFAM" id="SSF55550">
    <property type="entry name" value="SH2 domain"/>
    <property type="match status" value="1"/>
</dbReference>
<dbReference type="SUPFAM" id="SSF50044">
    <property type="entry name" value="SH3-domain"/>
    <property type="match status" value="1"/>
</dbReference>
<dbReference type="PROSITE" id="PS00107">
    <property type="entry name" value="PROTEIN_KINASE_ATP"/>
    <property type="match status" value="1"/>
</dbReference>
<dbReference type="PROSITE" id="PS50011">
    <property type="entry name" value="PROTEIN_KINASE_DOM"/>
    <property type="match status" value="1"/>
</dbReference>
<dbReference type="PROSITE" id="PS00109">
    <property type="entry name" value="PROTEIN_KINASE_TYR"/>
    <property type="match status" value="1"/>
</dbReference>
<dbReference type="PROSITE" id="PS50001">
    <property type="entry name" value="SH2"/>
    <property type="match status" value="1"/>
</dbReference>
<dbReference type="PROSITE" id="PS50002">
    <property type="entry name" value="SH3"/>
    <property type="match status" value="1"/>
</dbReference>
<reference key="1">
    <citation type="journal article" date="1992" name="Oncogene">
        <title>Multiple src-related kinase genes, srk1-4, in the fresh water sponge Spongilla lacustris.</title>
        <authorList>
            <person name="Ottilie S."/>
            <person name="Raulf F."/>
            <person name="Barnekow A."/>
            <person name="Hannig G."/>
            <person name="Schartl M."/>
        </authorList>
    </citation>
    <scope>NUCLEOTIDE SEQUENCE [MRNA]</scope>
</reference>
<keyword id="KW-0025">Alternative splicing</keyword>
<keyword id="KW-0067">ATP-binding</keyword>
<keyword id="KW-0963">Cytoplasm</keyword>
<keyword id="KW-0418">Kinase</keyword>
<keyword id="KW-0547">Nucleotide-binding</keyword>
<keyword id="KW-0597">Phosphoprotein</keyword>
<keyword id="KW-0727">SH2 domain</keyword>
<keyword id="KW-0728">SH3 domain</keyword>
<keyword id="KW-0808">Transferase</keyword>
<keyword id="KW-0829">Tyrosine-protein kinase</keyword>
<protein>
    <recommendedName>
        <fullName>Tyrosine-protein kinase isoform SRK1</fullName>
        <ecNumber>2.7.10.2</ecNumber>
    </recommendedName>
</protein>
<feature type="chain" id="PRO_0000088156" description="Tyrosine-protein kinase isoform SRK1">
    <location>
        <begin position="1"/>
        <end position="505"/>
    </location>
</feature>
<feature type="domain" description="SH3" evidence="3">
    <location>
        <begin position="54"/>
        <end position="116"/>
    </location>
</feature>
<feature type="domain" description="SH2" evidence="2">
    <location>
        <begin position="122"/>
        <end position="214"/>
    </location>
</feature>
<feature type="domain" description="Protein kinase" evidence="1">
    <location>
        <begin position="240"/>
        <end position="493"/>
    </location>
</feature>
<feature type="region of interest" description="Disordered" evidence="5">
    <location>
        <begin position="1"/>
        <end position="53"/>
    </location>
</feature>
<feature type="compositionally biased region" description="Polar residues" evidence="5">
    <location>
        <begin position="1"/>
        <end position="10"/>
    </location>
</feature>
<feature type="compositionally biased region" description="Polar residues" evidence="5">
    <location>
        <begin position="18"/>
        <end position="31"/>
    </location>
</feature>
<feature type="active site" description="Proton acceptor" evidence="1 4">
    <location>
        <position position="359"/>
    </location>
</feature>
<feature type="binding site" evidence="1">
    <location>
        <begin position="246"/>
        <end position="254"/>
    </location>
    <ligand>
        <name>ATP</name>
        <dbReference type="ChEBI" id="CHEBI:30616"/>
    </ligand>
</feature>
<feature type="binding site" evidence="1">
    <location>
        <position position="268"/>
    </location>
    <ligand>
        <name>ATP</name>
        <dbReference type="ChEBI" id="CHEBI:30616"/>
    </ligand>
</feature>
<comment type="catalytic activity">
    <reaction evidence="4">
        <text>L-tyrosyl-[protein] + ATP = O-phospho-L-tyrosyl-[protein] + ADP + H(+)</text>
        <dbReference type="Rhea" id="RHEA:10596"/>
        <dbReference type="Rhea" id="RHEA-COMP:10136"/>
        <dbReference type="Rhea" id="RHEA-COMP:20101"/>
        <dbReference type="ChEBI" id="CHEBI:15378"/>
        <dbReference type="ChEBI" id="CHEBI:30616"/>
        <dbReference type="ChEBI" id="CHEBI:46858"/>
        <dbReference type="ChEBI" id="CHEBI:61978"/>
        <dbReference type="ChEBI" id="CHEBI:456216"/>
        <dbReference type="EC" id="2.7.10.2"/>
    </reaction>
</comment>
<comment type="subcellular location">
    <subcellularLocation>
        <location evidence="6">Cytoplasm</location>
    </subcellularLocation>
</comment>
<comment type="alternative products">
    <event type="alternative splicing"/>
    <isoform>
        <id>P42686-1</id>
        <name>SRK1</name>
        <sequence type="displayed"/>
    </isoform>
    <isoform>
        <id>P42690-1</id>
        <name>SRK4</name>
        <sequence type="external"/>
    </isoform>
</comment>
<comment type="similarity">
    <text evidence="1">Belongs to the protein kinase superfamily. Tyr protein kinase family. SRC subfamily.</text>
</comment>
<sequence length="505" mass="57693">MGSCCSSQDGDGNGKATAGSTVDSHELSQSVKGKIKQPEPKPKPPPQVPPAQDVKYPIYVGKYDYDSRTDDDLSFKKGDLMYIISTDEGDWWFARSKDTAGKEGYIPSNYVAEYKSLDAEEWFLGKIKRVEAEKMLNQSFNQVGSFLIRDSETTPGDFSLSVKDQDRVRHYRVRRLEDGSLFVTRRSTFQILHELVDHYKIETDGLCCKLLYPCLQAEKPQTAGLLRQANEEWEIEKTQIKLLRRLGAGQFGEVWEGLWNGTTSVAVKTLKPGTMSVEEFLQEASIMKRLRHPKLIQLYAVCTKEEPIYIVTELMKYGSLLEYLRGEDGVLKIEQLVDVAAQVASGMSYLEQQNYIHRDLAARNILVGEHGICKVADFGLARVIDEEIYEAHTGAKFPIKWTAPEAAMYNRFTIKSDVWSFGVVLYEIITYGRFPYPGMTNPEVLEKIQQNYRMPCPANCPKQFHDIMLDCWREDPASRPTFETLQWQLEEFFNSEGYRDPDAIH</sequence>
<accession>P42686</accession>